<reference key="1">
    <citation type="journal article" date="1995" name="Biochemistry">
        <title>The binding site of the nicotinic acetylcholine receptor in animal species resistant to alpha-bungarotoxin.</title>
        <authorList>
            <person name="Barchan D."/>
            <person name="Ovadia M."/>
            <person name="Kochva E."/>
            <person name="Fuchs S."/>
        </authorList>
    </citation>
    <scope>NUCLEOTIDE SEQUENCE [MRNA]</scope>
    <source>
        <tissue>Muscle</tissue>
    </source>
</reference>
<protein>
    <recommendedName>
        <fullName>Acetylcholine receptor subunit alpha</fullName>
    </recommendedName>
</protein>
<sequence length="84" mass="9823">AIFKSYCEIIVTHFPFDEQNCSMKLGTWTYDGSVVAINPESDQPDLSNFMESGEWVIKESRGWKHWVFYACCPTTPYLDITYHF</sequence>
<evidence type="ECO:0000250" key="1"/>
<evidence type="ECO:0000250" key="2">
    <source>
        <dbReference type="UniProtKB" id="P02708"/>
    </source>
</evidence>
<evidence type="ECO:0000250" key="3">
    <source>
        <dbReference type="UniProtKB" id="P02709"/>
    </source>
</evidence>
<evidence type="ECO:0000255" key="4"/>
<evidence type="ECO:0000305" key="5"/>
<feature type="chain" id="PRO_0000076972" description="Acetylcholine receptor subunit alpha">
    <location>
        <begin position="1" status="less than"/>
        <end position="84" status="greater than"/>
    </location>
</feature>
<feature type="glycosylation site" description="N-linked (GlcNAc...) asparagine" evidence="4">
    <location>
        <position position="20"/>
    </location>
</feature>
<feature type="disulfide bond" evidence="1">
    <location>
        <begin position="7"/>
        <end position="21"/>
    </location>
</feature>
<feature type="disulfide bond" description="Associated with receptor activation" evidence="1">
    <location>
        <begin position="71"/>
        <end position="72"/>
    </location>
</feature>
<feature type="non-terminal residue">
    <location>
        <position position="1"/>
    </location>
</feature>
<feature type="non-terminal residue">
    <location>
        <position position="84"/>
    </location>
</feature>
<comment type="function">
    <text evidence="2">Upon acetylcholine binding, the AChR responds by an extensive change in conformation that affects all subunits and leads to opening of an ion-conducting channel across the plasma membrane.</text>
</comment>
<comment type="catalytic activity">
    <reaction evidence="3">
        <text>K(+)(in) = K(+)(out)</text>
        <dbReference type="Rhea" id="RHEA:29463"/>
        <dbReference type="ChEBI" id="CHEBI:29103"/>
    </reaction>
</comment>
<comment type="catalytic activity">
    <reaction evidence="3">
        <text>Na(+)(in) = Na(+)(out)</text>
        <dbReference type="Rhea" id="RHEA:34963"/>
        <dbReference type="ChEBI" id="CHEBI:29101"/>
    </reaction>
</comment>
<comment type="subunit">
    <text evidence="2">One of the alpha chains that assemble within the acetylcholine receptor, a pentamer of two alpha chains, a beta, a delta, and a gamma (in immature muscle) or epsilon (in mature muscle) chains. The muscle heteropentamer composed of alpha-1, beta-1, delta, epsilon subunits interacts with the alpha-conotoxin ImII.</text>
</comment>
<comment type="subcellular location">
    <subcellularLocation>
        <location evidence="2">Postsynaptic cell membrane</location>
        <topology evidence="4">Multi-pass membrane protein</topology>
    </subcellularLocation>
    <subcellularLocation>
        <location evidence="2">Cell membrane</location>
        <topology evidence="4">Multi-pass membrane protein</topology>
    </subcellularLocation>
</comment>
<comment type="similarity">
    <text evidence="5">Belongs to the ligand-gated ion channel (TC 1.A.9) family. Acetylcholine receptor (TC 1.A.9.1) subfamily. Alpha-1/CHRNA1 sub-subfamily.</text>
</comment>
<accession>P54250</accession>
<organism>
    <name type="scientific">Felis catus</name>
    <name type="common">Cat</name>
    <name type="synonym">Felis silvestris catus</name>
    <dbReference type="NCBI Taxonomy" id="9685"/>
    <lineage>
        <taxon>Eukaryota</taxon>
        <taxon>Metazoa</taxon>
        <taxon>Chordata</taxon>
        <taxon>Craniata</taxon>
        <taxon>Vertebrata</taxon>
        <taxon>Euteleostomi</taxon>
        <taxon>Mammalia</taxon>
        <taxon>Eutheria</taxon>
        <taxon>Laurasiatheria</taxon>
        <taxon>Carnivora</taxon>
        <taxon>Feliformia</taxon>
        <taxon>Felidae</taxon>
        <taxon>Felinae</taxon>
        <taxon>Felis</taxon>
    </lineage>
</organism>
<dbReference type="EMBL" id="U17007">
    <property type="protein sequence ID" value="AAA89114.1"/>
    <property type="molecule type" value="mRNA"/>
</dbReference>
<dbReference type="SMR" id="P54250"/>
<dbReference type="STRING" id="9685.ENSFCAP00000054888"/>
<dbReference type="GlyCosmos" id="P54250">
    <property type="glycosylation" value="1 site, No reported glycans"/>
</dbReference>
<dbReference type="PaxDb" id="9685-ENSFCAP00000013080"/>
<dbReference type="eggNOG" id="KOG3645">
    <property type="taxonomic scope" value="Eukaryota"/>
</dbReference>
<dbReference type="HOGENOM" id="CLU_018074_1_0_1"/>
<dbReference type="InParanoid" id="P54250"/>
<dbReference type="TreeFam" id="TF315605"/>
<dbReference type="Proteomes" id="UP000011712">
    <property type="component" value="Unplaced"/>
</dbReference>
<dbReference type="GO" id="GO:0045211">
    <property type="term" value="C:postsynaptic membrane"/>
    <property type="evidence" value="ECO:0007669"/>
    <property type="project" value="UniProtKB-SubCell"/>
</dbReference>
<dbReference type="GO" id="GO:0005230">
    <property type="term" value="F:extracellular ligand-gated monoatomic ion channel activity"/>
    <property type="evidence" value="ECO:0007669"/>
    <property type="project" value="InterPro"/>
</dbReference>
<dbReference type="GO" id="GO:0004888">
    <property type="term" value="F:transmembrane signaling receptor activity"/>
    <property type="evidence" value="ECO:0007669"/>
    <property type="project" value="InterPro"/>
</dbReference>
<dbReference type="FunFam" id="2.70.170.10:FF:000119">
    <property type="entry name" value="Acetylcholine receptor subunit alpha"/>
    <property type="match status" value="1"/>
</dbReference>
<dbReference type="Gene3D" id="2.70.170.10">
    <property type="entry name" value="Neurotransmitter-gated ion-channel ligand-binding domain"/>
    <property type="match status" value="1"/>
</dbReference>
<dbReference type="InterPro" id="IPR006202">
    <property type="entry name" value="Neur_chan_lig-bd"/>
</dbReference>
<dbReference type="InterPro" id="IPR036734">
    <property type="entry name" value="Neur_chan_lig-bd_sf"/>
</dbReference>
<dbReference type="InterPro" id="IPR006201">
    <property type="entry name" value="Neur_channel"/>
</dbReference>
<dbReference type="InterPro" id="IPR018000">
    <property type="entry name" value="Neurotransmitter_ion_chnl_CS"/>
</dbReference>
<dbReference type="PANTHER" id="PTHR18945">
    <property type="entry name" value="NEUROTRANSMITTER GATED ION CHANNEL"/>
    <property type="match status" value="1"/>
</dbReference>
<dbReference type="Pfam" id="PF02931">
    <property type="entry name" value="Neur_chan_LBD"/>
    <property type="match status" value="1"/>
</dbReference>
<dbReference type="SUPFAM" id="SSF63712">
    <property type="entry name" value="Nicotinic receptor ligand binding domain-like"/>
    <property type="match status" value="1"/>
</dbReference>
<dbReference type="PROSITE" id="PS00236">
    <property type="entry name" value="NEUROTR_ION_CHANNEL"/>
    <property type="match status" value="1"/>
</dbReference>
<name>ACHA_FELCA</name>
<proteinExistence type="evidence at transcript level"/>
<keyword id="KW-1003">Cell membrane</keyword>
<keyword id="KW-1015">Disulfide bond</keyword>
<keyword id="KW-0325">Glycoprotein</keyword>
<keyword id="KW-0407">Ion channel</keyword>
<keyword id="KW-0406">Ion transport</keyword>
<keyword id="KW-1071">Ligand-gated ion channel</keyword>
<keyword id="KW-0472">Membrane</keyword>
<keyword id="KW-0628">Postsynaptic cell membrane</keyword>
<keyword id="KW-0675">Receptor</keyword>
<keyword id="KW-1185">Reference proteome</keyword>
<keyword id="KW-0770">Synapse</keyword>
<keyword id="KW-0812">Transmembrane</keyword>
<keyword id="KW-0813">Transport</keyword>
<gene>
    <name type="primary">CHRNA1</name>
</gene>